<dbReference type="EMBL" id="FO080275">
    <property type="protein sequence ID" value="CCD62524.1"/>
    <property type="molecule type" value="Genomic_DNA"/>
</dbReference>
<dbReference type="EMBL" id="FO080453">
    <property type="protein sequence ID" value="CCD63830.1"/>
    <property type="molecule type" value="Genomic_DNA"/>
</dbReference>
<dbReference type="PIR" id="A88683">
    <property type="entry name" value="A88683"/>
</dbReference>
<dbReference type="RefSeq" id="NP_500711.1">
    <property type="nucleotide sequence ID" value="NM_068310.8"/>
</dbReference>
<dbReference type="RefSeq" id="NP_500713.1">
    <property type="nucleotide sequence ID" value="NM_068312.5"/>
</dbReference>
<dbReference type="SMR" id="Q17856"/>
<dbReference type="BioGRID" id="42398">
    <property type="interactions" value="1"/>
</dbReference>
<dbReference type="FunCoup" id="Q17856">
    <property type="interactions" value="13"/>
</dbReference>
<dbReference type="STRING" id="6239.C09B9.6.1"/>
<dbReference type="PaxDb" id="6239-C09B9.6"/>
<dbReference type="PeptideAtlas" id="Q17856"/>
<dbReference type="EnsemblMetazoa" id="C09B9.6.1">
    <property type="protein sequence ID" value="C09B9.6.1"/>
    <property type="gene ID" value="WBGene00003448"/>
</dbReference>
<dbReference type="EnsemblMetazoa" id="R13H9.2.1">
    <property type="protein sequence ID" value="R13H9.2.1"/>
    <property type="gene ID" value="WBGene00003450"/>
</dbReference>
<dbReference type="GeneID" id="177272"/>
<dbReference type="GeneID" id="177274"/>
<dbReference type="KEGG" id="cel:CELE_C09B9.6"/>
<dbReference type="KEGG" id="cel:CELE_R13H9.2"/>
<dbReference type="UCSC" id="C09B9.6">
    <property type="organism name" value="c. elegans"/>
</dbReference>
<dbReference type="AGR" id="WB:WBGene00003448"/>
<dbReference type="AGR" id="WB:WBGene00003450"/>
<dbReference type="CTD" id="177272"/>
<dbReference type="CTD" id="177274"/>
<dbReference type="WormBase" id="C09B9.6">
    <property type="protein sequence ID" value="CE06798"/>
    <property type="gene ID" value="WBGene00003448"/>
    <property type="gene designation" value="msp-55"/>
</dbReference>
<dbReference type="WormBase" id="R13H9.2">
    <property type="protein sequence ID" value="CE06798"/>
    <property type="gene ID" value="WBGene00003450"/>
    <property type="gene designation" value="msp-57"/>
</dbReference>
<dbReference type="eggNOG" id="ENOG502RXF6">
    <property type="taxonomic scope" value="Eukaryota"/>
</dbReference>
<dbReference type="GeneTree" id="ENSGT00970000195833"/>
<dbReference type="HOGENOM" id="CLU_120664_0_1_1"/>
<dbReference type="InParanoid" id="Q17856"/>
<dbReference type="OrthoDB" id="5918453at2759"/>
<dbReference type="PhylomeDB" id="Q17856"/>
<dbReference type="PRO" id="PR:Q17856"/>
<dbReference type="Proteomes" id="UP000001940">
    <property type="component" value="Chromosome IV"/>
</dbReference>
<dbReference type="Bgee" id="WBGene00003448">
    <property type="expression patterns" value="Expressed in adult organism and 1 other cell type or tissue"/>
</dbReference>
<dbReference type="GO" id="GO:0005737">
    <property type="term" value="C:cytoplasm"/>
    <property type="evidence" value="ECO:0007669"/>
    <property type="project" value="UniProtKB-KW"/>
</dbReference>
<dbReference type="GO" id="GO:0005856">
    <property type="term" value="C:cytoskeleton"/>
    <property type="evidence" value="ECO:0007669"/>
    <property type="project" value="UniProtKB-SubCell"/>
</dbReference>
<dbReference type="GO" id="GO:0031143">
    <property type="term" value="C:pseudopodium"/>
    <property type="evidence" value="ECO:0007669"/>
    <property type="project" value="UniProtKB-SubCell"/>
</dbReference>
<dbReference type="FunFam" id="2.60.40.10:FF:001120">
    <property type="entry name" value="Major sperm protein 19/31/40/45/50/51/53/59/61/65/81/113/142"/>
    <property type="match status" value="1"/>
</dbReference>
<dbReference type="Gene3D" id="2.60.40.10">
    <property type="entry name" value="Immunoglobulins"/>
    <property type="match status" value="1"/>
</dbReference>
<dbReference type="InterPro" id="IPR013783">
    <property type="entry name" value="Ig-like_fold"/>
</dbReference>
<dbReference type="InterPro" id="IPR000535">
    <property type="entry name" value="MSP_dom"/>
</dbReference>
<dbReference type="InterPro" id="IPR051155">
    <property type="entry name" value="Nematode_MSP"/>
</dbReference>
<dbReference type="InterPro" id="IPR008962">
    <property type="entry name" value="PapD-like_sf"/>
</dbReference>
<dbReference type="PANTHER" id="PTHR22920">
    <property type="entry name" value="MAJOR SPERM PROTEIN"/>
    <property type="match status" value="1"/>
</dbReference>
<dbReference type="PANTHER" id="PTHR22920:SF7">
    <property type="entry name" value="MSP DOMAIN-CONTAINING PROTEIN-RELATED"/>
    <property type="match status" value="1"/>
</dbReference>
<dbReference type="Pfam" id="PF00635">
    <property type="entry name" value="Motile_Sperm"/>
    <property type="match status" value="1"/>
</dbReference>
<dbReference type="SUPFAM" id="SSF49354">
    <property type="entry name" value="PapD-like"/>
    <property type="match status" value="1"/>
</dbReference>
<dbReference type="PROSITE" id="PS50202">
    <property type="entry name" value="MSP"/>
    <property type="match status" value="1"/>
</dbReference>
<gene>
    <name type="primary">msp-55</name>
    <name type="ORF">C09B9.6</name>
</gene>
<gene>
    <name type="primary">msp-57</name>
    <name type="ORF">R13H9.2</name>
</gene>
<reference key="1">
    <citation type="journal article" date="1998" name="Science">
        <title>Genome sequence of the nematode C. elegans: a platform for investigating biology.</title>
        <authorList>
            <consortium name="The C. elegans sequencing consortium"/>
        </authorList>
    </citation>
    <scope>NUCLEOTIDE SEQUENCE [LARGE SCALE GENOMIC DNA]</scope>
    <source>
        <strain>Bristol N2</strain>
    </source>
</reference>
<name>MSP55_CAEEL</name>
<proteinExistence type="evidence at transcript level"/>
<evidence type="ECO:0000250" key="1"/>
<evidence type="ECO:0000255" key="2">
    <source>
        <dbReference type="PROSITE-ProRule" id="PRU00132"/>
    </source>
</evidence>
<sequence length="127" mass="14251">MAQSVPPGDIQTQPGTKIVFNAPYDDKHTYHIKVINSSARRIVYGIKTTNMKRLGVDPPCGVLDPKEAVLLAVSCDAFAFGQEDTNNDRITVEWTNTPDGAAKQFRREWFQGDGMVRRKNLPIEYNP</sequence>
<organism>
    <name type="scientific">Caenorhabditis elegans</name>
    <dbReference type="NCBI Taxonomy" id="6239"/>
    <lineage>
        <taxon>Eukaryota</taxon>
        <taxon>Metazoa</taxon>
        <taxon>Ecdysozoa</taxon>
        <taxon>Nematoda</taxon>
        <taxon>Chromadorea</taxon>
        <taxon>Rhabditida</taxon>
        <taxon>Rhabditina</taxon>
        <taxon>Rhabditomorpha</taxon>
        <taxon>Rhabditoidea</taxon>
        <taxon>Rhabditidae</taxon>
        <taxon>Peloderinae</taxon>
        <taxon>Caenorhabditis</taxon>
    </lineage>
</organism>
<accession>Q17856</accession>
<feature type="initiator methionine" description="Removed" evidence="1">
    <location>
        <position position="1"/>
    </location>
</feature>
<feature type="chain" id="PRO_0000213442" description="Major sperm protein 55/57">
    <location>
        <begin position="2"/>
        <end position="127"/>
    </location>
</feature>
<feature type="domain" description="MSP" evidence="2">
    <location>
        <begin position="9"/>
        <end position="126"/>
    </location>
</feature>
<feature type="modified residue" description="N-acetylalanine" evidence="1">
    <location>
        <position position="2"/>
    </location>
</feature>
<keyword id="KW-0007">Acetylation</keyword>
<keyword id="KW-0966">Cell projection</keyword>
<keyword id="KW-0963">Cytoplasm</keyword>
<keyword id="KW-0206">Cytoskeleton</keyword>
<keyword id="KW-1185">Reference proteome</keyword>
<comment type="function">
    <text>Central component in molecular interactions underlying sperm crawling. Forms an extensive filament system that extends from sperm villipoda, along the leading edge of the pseudopod.</text>
</comment>
<comment type="subcellular location">
    <subcellularLocation>
        <location>Cell projection</location>
        <location>Pseudopodium</location>
    </subcellularLocation>
    <subcellularLocation>
        <location>Cytoplasm</location>
        <location>Cytoskeleton</location>
    </subcellularLocation>
</comment>
<comment type="tissue specificity">
    <text>Sperm.</text>
</comment>
<comment type="miscellaneous">
    <text>Around 30 MSP isoforms may exist in C.elegans.</text>
</comment>
<protein>
    <recommendedName>
        <fullName>Major sperm protein 55/57</fullName>
        <shortName>MSP</shortName>
    </recommendedName>
</protein>